<reference key="1">
    <citation type="journal article" date="2002" name="Nat. Genet.">
        <title>ASPM is a major determinant of cerebral cortical size.</title>
        <authorList>
            <person name="Bond J."/>
            <person name="Roberts E."/>
            <person name="Mochida G.H."/>
            <person name="Hampshire D.J."/>
            <person name="Scott S."/>
            <person name="Askham J.M."/>
            <person name="Springell K."/>
            <person name="Mahadevan M."/>
            <person name="Crow Y.J."/>
            <person name="Markham A.F."/>
            <person name="Walsh C.A."/>
            <person name="Woods C.G."/>
        </authorList>
    </citation>
    <scope>NUCLEOTIDE SEQUENCE [MRNA] (ISOFORM 1)</scope>
    <scope>FUNCTION</scope>
    <scope>TISSUE SPECIFICITY</scope>
    <scope>DEVELOPMENTAL STAGE</scope>
    <source>
        <strain>Swiss Webster</strain>
    </source>
</reference>
<reference key="2">
    <citation type="journal article" date="2005" name="Hum. Mol. Genet.">
        <title>The microcephaly ASPM gene is expressed in proliferating tissues and encodes for a mitotic spindle protein.</title>
        <authorList>
            <person name="Kouprina N."/>
            <person name="Pavlicek A."/>
            <person name="Collins N.K."/>
            <person name="Nakano M."/>
            <person name="Noskov V.N."/>
            <person name="Ohzeki J.I."/>
            <person name="Mochida G.H."/>
            <person name="Risinger J.I."/>
            <person name="Goldsmith P."/>
            <person name="Gunsior M."/>
            <person name="Solomon G."/>
            <person name="Gersch W."/>
            <person name="Kim J.H."/>
            <person name="Barrett J.C."/>
            <person name="Walsh C.A."/>
            <person name="Jurka J."/>
            <person name="Masumoto H."/>
            <person name="Larionov V."/>
        </authorList>
    </citation>
    <scope>NUCLEOTIDE SEQUENCE (ISOFORM 2)</scope>
    <source>
        <strain>C57BL/6J</strain>
    </source>
</reference>
<reference key="3">
    <citation type="journal article" date="2009" name="PLoS Biol.">
        <title>Lineage-specific biology revealed by a finished genome assembly of the mouse.</title>
        <authorList>
            <person name="Church D.M."/>
            <person name="Goodstadt L."/>
            <person name="Hillier L.W."/>
            <person name="Zody M.C."/>
            <person name="Goldstein S."/>
            <person name="She X."/>
            <person name="Bult C.J."/>
            <person name="Agarwala R."/>
            <person name="Cherry J.L."/>
            <person name="DiCuccio M."/>
            <person name="Hlavina W."/>
            <person name="Kapustin Y."/>
            <person name="Meric P."/>
            <person name="Maglott D."/>
            <person name="Birtle Z."/>
            <person name="Marques A.C."/>
            <person name="Graves T."/>
            <person name="Zhou S."/>
            <person name="Teague B."/>
            <person name="Potamousis K."/>
            <person name="Churas C."/>
            <person name="Place M."/>
            <person name="Herschleb J."/>
            <person name="Runnheim R."/>
            <person name="Forrest D."/>
            <person name="Amos-Landgraf J."/>
            <person name="Schwartz D.C."/>
            <person name="Cheng Z."/>
            <person name="Lindblad-Toh K."/>
            <person name="Eichler E.E."/>
            <person name="Ponting C.P."/>
        </authorList>
    </citation>
    <scope>NUCLEOTIDE SEQUENCE [LARGE SCALE GENOMIC DNA]</scope>
    <source>
        <strain>C57BL/6J</strain>
    </source>
</reference>
<reference key="4">
    <citation type="journal article" date="2005" name="Science">
        <title>The transcriptional landscape of the mammalian genome.</title>
        <authorList>
            <person name="Carninci P."/>
            <person name="Kasukawa T."/>
            <person name="Katayama S."/>
            <person name="Gough J."/>
            <person name="Frith M.C."/>
            <person name="Maeda N."/>
            <person name="Oyama R."/>
            <person name="Ravasi T."/>
            <person name="Lenhard B."/>
            <person name="Wells C."/>
            <person name="Kodzius R."/>
            <person name="Shimokawa K."/>
            <person name="Bajic V.B."/>
            <person name="Brenner S.E."/>
            <person name="Batalov S."/>
            <person name="Forrest A.R."/>
            <person name="Zavolan M."/>
            <person name="Davis M.J."/>
            <person name="Wilming L.G."/>
            <person name="Aidinis V."/>
            <person name="Allen J.E."/>
            <person name="Ambesi-Impiombato A."/>
            <person name="Apweiler R."/>
            <person name="Aturaliya R.N."/>
            <person name="Bailey T.L."/>
            <person name="Bansal M."/>
            <person name="Baxter L."/>
            <person name="Beisel K.W."/>
            <person name="Bersano T."/>
            <person name="Bono H."/>
            <person name="Chalk A.M."/>
            <person name="Chiu K.P."/>
            <person name="Choudhary V."/>
            <person name="Christoffels A."/>
            <person name="Clutterbuck D.R."/>
            <person name="Crowe M.L."/>
            <person name="Dalla E."/>
            <person name="Dalrymple B.P."/>
            <person name="de Bono B."/>
            <person name="Della Gatta G."/>
            <person name="di Bernardo D."/>
            <person name="Down T."/>
            <person name="Engstrom P."/>
            <person name="Fagiolini M."/>
            <person name="Faulkner G."/>
            <person name="Fletcher C.F."/>
            <person name="Fukushima T."/>
            <person name="Furuno M."/>
            <person name="Futaki S."/>
            <person name="Gariboldi M."/>
            <person name="Georgii-Hemming P."/>
            <person name="Gingeras T.R."/>
            <person name="Gojobori T."/>
            <person name="Green R.E."/>
            <person name="Gustincich S."/>
            <person name="Harbers M."/>
            <person name="Hayashi Y."/>
            <person name="Hensch T.K."/>
            <person name="Hirokawa N."/>
            <person name="Hill D."/>
            <person name="Huminiecki L."/>
            <person name="Iacono M."/>
            <person name="Ikeo K."/>
            <person name="Iwama A."/>
            <person name="Ishikawa T."/>
            <person name="Jakt M."/>
            <person name="Kanapin A."/>
            <person name="Katoh M."/>
            <person name="Kawasawa Y."/>
            <person name="Kelso J."/>
            <person name="Kitamura H."/>
            <person name="Kitano H."/>
            <person name="Kollias G."/>
            <person name="Krishnan S.P."/>
            <person name="Kruger A."/>
            <person name="Kummerfeld S.K."/>
            <person name="Kurochkin I.V."/>
            <person name="Lareau L.F."/>
            <person name="Lazarevic D."/>
            <person name="Lipovich L."/>
            <person name="Liu J."/>
            <person name="Liuni S."/>
            <person name="McWilliam S."/>
            <person name="Madan Babu M."/>
            <person name="Madera M."/>
            <person name="Marchionni L."/>
            <person name="Matsuda H."/>
            <person name="Matsuzawa S."/>
            <person name="Miki H."/>
            <person name="Mignone F."/>
            <person name="Miyake S."/>
            <person name="Morris K."/>
            <person name="Mottagui-Tabar S."/>
            <person name="Mulder N."/>
            <person name="Nakano N."/>
            <person name="Nakauchi H."/>
            <person name="Ng P."/>
            <person name="Nilsson R."/>
            <person name="Nishiguchi S."/>
            <person name="Nishikawa S."/>
            <person name="Nori F."/>
            <person name="Ohara O."/>
            <person name="Okazaki Y."/>
            <person name="Orlando V."/>
            <person name="Pang K.C."/>
            <person name="Pavan W.J."/>
            <person name="Pavesi G."/>
            <person name="Pesole G."/>
            <person name="Petrovsky N."/>
            <person name="Piazza S."/>
            <person name="Reed J."/>
            <person name="Reid J.F."/>
            <person name="Ring B.Z."/>
            <person name="Ringwald M."/>
            <person name="Rost B."/>
            <person name="Ruan Y."/>
            <person name="Salzberg S.L."/>
            <person name="Sandelin A."/>
            <person name="Schneider C."/>
            <person name="Schoenbach C."/>
            <person name="Sekiguchi K."/>
            <person name="Semple C.A."/>
            <person name="Seno S."/>
            <person name="Sessa L."/>
            <person name="Sheng Y."/>
            <person name="Shibata Y."/>
            <person name="Shimada H."/>
            <person name="Shimada K."/>
            <person name="Silva D."/>
            <person name="Sinclair B."/>
            <person name="Sperling S."/>
            <person name="Stupka E."/>
            <person name="Sugiura K."/>
            <person name="Sultana R."/>
            <person name="Takenaka Y."/>
            <person name="Taki K."/>
            <person name="Tammoja K."/>
            <person name="Tan S.L."/>
            <person name="Tang S."/>
            <person name="Taylor M.S."/>
            <person name="Tegner J."/>
            <person name="Teichmann S.A."/>
            <person name="Ueda H.R."/>
            <person name="van Nimwegen E."/>
            <person name="Verardo R."/>
            <person name="Wei C.L."/>
            <person name="Yagi K."/>
            <person name="Yamanishi H."/>
            <person name="Zabarovsky E."/>
            <person name="Zhu S."/>
            <person name="Zimmer A."/>
            <person name="Hide W."/>
            <person name="Bult C."/>
            <person name="Grimmond S.M."/>
            <person name="Teasdale R.D."/>
            <person name="Liu E.T."/>
            <person name="Brusic V."/>
            <person name="Quackenbush J."/>
            <person name="Wahlestedt C."/>
            <person name="Mattick J.S."/>
            <person name="Hume D.A."/>
            <person name="Kai C."/>
            <person name="Sasaki D."/>
            <person name="Tomaru Y."/>
            <person name="Fukuda S."/>
            <person name="Kanamori-Katayama M."/>
            <person name="Suzuki M."/>
            <person name="Aoki J."/>
            <person name="Arakawa T."/>
            <person name="Iida J."/>
            <person name="Imamura K."/>
            <person name="Itoh M."/>
            <person name="Kato T."/>
            <person name="Kawaji H."/>
            <person name="Kawagashira N."/>
            <person name="Kawashima T."/>
            <person name="Kojima M."/>
            <person name="Kondo S."/>
            <person name="Konno H."/>
            <person name="Nakano K."/>
            <person name="Ninomiya N."/>
            <person name="Nishio T."/>
            <person name="Okada M."/>
            <person name="Plessy C."/>
            <person name="Shibata K."/>
            <person name="Shiraki T."/>
            <person name="Suzuki S."/>
            <person name="Tagami M."/>
            <person name="Waki K."/>
            <person name="Watahiki A."/>
            <person name="Okamura-Oho Y."/>
            <person name="Suzuki H."/>
            <person name="Kawai J."/>
            <person name="Hayashizaki Y."/>
        </authorList>
    </citation>
    <scope>NUCLEOTIDE SEQUENCE [LARGE SCALE MRNA] OF 1-612</scope>
    <source>
        <strain>C57BL/6J</strain>
        <tissue>Embryo</tissue>
    </source>
</reference>
<reference key="5">
    <citation type="journal article" date="1998" name="J. Cell Sci.">
        <title>The novel murine calmodulin-binding protein Sha1 disrupts mitotic spindle and replication checkpoint functions in fission yeast.</title>
        <authorList>
            <person name="Craig R."/>
            <person name="Norbury C."/>
        </authorList>
    </citation>
    <scope>NUCLEOTIDE SEQUENCE [MRNA] OF 2532-3122 (ISOFORM 1)</scope>
    <scope>FUNCTION</scope>
    <scope>SUBCELLULAR LOCATION</scope>
    <source>
        <strain>SWR/J</strain>
    </source>
</reference>
<reference key="6">
    <citation type="journal article" date="2002" name="Mech. Dev.">
        <title>Murine calmodulin binding protein 1 (Calmbp1): tissue-specific expression during development and in adult tissues.</title>
        <authorList>
            <person name="Lueers G.H."/>
            <person name="Michels M."/>
            <person name="Schwaab U."/>
            <person name="Franz T."/>
        </authorList>
    </citation>
    <scope>TISSUE SPECIFICITY</scope>
</reference>
<reference key="7">
    <citation type="journal article" date="2017" name="Nat. Cell Biol.">
        <title>Microtubule minus-end regulation at spindle poles by an ASPM-katanin complex.</title>
        <authorList>
            <person name="Jiang K."/>
            <person name="Rezabkova L."/>
            <person name="Hua S."/>
            <person name="Liu Q."/>
            <person name="Capitani G."/>
            <person name="Maarten Altelaar A.F."/>
            <person name="Heck A.J.R."/>
            <person name="Kammerer R.A."/>
            <person name="Steinmetz M.O."/>
            <person name="Akhmanova A."/>
        </authorList>
    </citation>
    <scope>FUNCTION</scope>
    <scope>INTERACTION WITH KATNA1 AND KATNB1</scope>
    <scope>SUBCELLULAR LOCATION</scope>
    <scope>MUTAGENESIS OF PHE-302; PHE-352 AND PHE-377</scope>
</reference>
<organism>
    <name type="scientific">Mus musculus</name>
    <name type="common">Mouse</name>
    <dbReference type="NCBI Taxonomy" id="10090"/>
    <lineage>
        <taxon>Eukaryota</taxon>
        <taxon>Metazoa</taxon>
        <taxon>Chordata</taxon>
        <taxon>Craniata</taxon>
        <taxon>Vertebrata</taxon>
        <taxon>Euteleostomi</taxon>
        <taxon>Mammalia</taxon>
        <taxon>Eutheria</taxon>
        <taxon>Euarchontoglires</taxon>
        <taxon>Glires</taxon>
        <taxon>Rodentia</taxon>
        <taxon>Myomorpha</taxon>
        <taxon>Muroidea</taxon>
        <taxon>Muridae</taxon>
        <taxon>Murinae</taxon>
        <taxon>Mus</taxon>
        <taxon>Mus</taxon>
    </lineage>
</organism>
<dbReference type="EMBL" id="AF533752">
    <property type="protein sequence ID" value="AAN46088.1"/>
    <property type="molecule type" value="mRNA"/>
</dbReference>
<dbReference type="EMBL" id="AY971958">
    <property type="protein sequence ID" value="AAY46816.1"/>
    <property type="molecule type" value="mRNA"/>
</dbReference>
<dbReference type="EMBL" id="AC158946">
    <property type="status" value="NOT_ANNOTATED_CDS"/>
    <property type="molecule type" value="Genomic_DNA"/>
</dbReference>
<dbReference type="EMBL" id="AL606536">
    <property type="status" value="NOT_ANNOTATED_CDS"/>
    <property type="molecule type" value="Genomic_DNA"/>
</dbReference>
<dbReference type="EMBL" id="AK050785">
    <property type="protein sequence ID" value="BAC34410.2"/>
    <property type="molecule type" value="mRNA"/>
</dbReference>
<dbReference type="EMBL" id="AK083710">
    <property type="protein sequence ID" value="BAC39000.1"/>
    <property type="molecule type" value="mRNA"/>
</dbReference>
<dbReference type="EMBL" id="AF062378">
    <property type="protein sequence ID" value="AAC79683.1"/>
    <property type="status" value="ALT_INIT"/>
    <property type="molecule type" value="mRNA"/>
</dbReference>
<dbReference type="CCDS" id="CCDS35729.1">
    <molecule id="Q8CJ27-1"/>
</dbReference>
<dbReference type="RefSeq" id="NP_033921.3">
    <molecule id="Q8CJ27-1"/>
    <property type="nucleotide sequence ID" value="NM_009791.4"/>
</dbReference>
<dbReference type="PDB" id="5LB7">
    <property type="method" value="X-ray"/>
    <property type="resolution" value="1.50 A"/>
    <property type="chains" value="C=347-355"/>
</dbReference>
<dbReference type="PDBsum" id="5LB7"/>
<dbReference type="SMR" id="Q8CJ27"/>
<dbReference type="BioGRID" id="198457">
    <property type="interactions" value="20"/>
</dbReference>
<dbReference type="FunCoup" id="Q8CJ27">
    <property type="interactions" value="392"/>
</dbReference>
<dbReference type="IntAct" id="Q8CJ27">
    <property type="interactions" value="2"/>
</dbReference>
<dbReference type="STRING" id="10090.ENSMUSP00000059159"/>
<dbReference type="GlyGen" id="Q8CJ27">
    <property type="glycosylation" value="1 site"/>
</dbReference>
<dbReference type="iPTMnet" id="Q8CJ27"/>
<dbReference type="PhosphoSitePlus" id="Q8CJ27"/>
<dbReference type="jPOST" id="Q8CJ27"/>
<dbReference type="PaxDb" id="10090-ENSMUSP00000059159"/>
<dbReference type="PeptideAtlas" id="Q8CJ27"/>
<dbReference type="ProteomicsDB" id="281852">
    <molecule id="Q8CJ27-1"/>
</dbReference>
<dbReference type="ProteomicsDB" id="281853">
    <molecule id="Q8CJ27-2"/>
</dbReference>
<dbReference type="Pumba" id="Q8CJ27"/>
<dbReference type="Antibodypedia" id="34476">
    <property type="antibodies" value="82 antibodies from 19 providers"/>
</dbReference>
<dbReference type="DNASU" id="12316"/>
<dbReference type="Ensembl" id="ENSMUST00000053364.12">
    <molecule id="Q8CJ27-1"/>
    <property type="protein sequence ID" value="ENSMUSP00000059159.9"/>
    <property type="gene ID" value="ENSMUSG00000033952.15"/>
</dbReference>
<dbReference type="Ensembl" id="ENSMUST00000200083.5">
    <molecule id="Q8CJ27-2"/>
    <property type="protein sequence ID" value="ENSMUSP00000142880.2"/>
    <property type="gene ID" value="ENSMUSG00000033952.15"/>
</dbReference>
<dbReference type="GeneID" id="12316"/>
<dbReference type="KEGG" id="mmu:12316"/>
<dbReference type="UCSC" id="uc007cwh.1">
    <molecule id="Q8CJ27-1"/>
    <property type="organism name" value="mouse"/>
</dbReference>
<dbReference type="AGR" id="MGI:1334448"/>
<dbReference type="CTD" id="259266"/>
<dbReference type="MGI" id="MGI:1334448">
    <property type="gene designation" value="Aspm"/>
</dbReference>
<dbReference type="VEuPathDB" id="HostDB:ENSMUSG00000033952"/>
<dbReference type="eggNOG" id="KOG0160">
    <property type="taxonomic scope" value="Eukaryota"/>
</dbReference>
<dbReference type="eggNOG" id="KOG0165">
    <property type="taxonomic scope" value="Eukaryota"/>
</dbReference>
<dbReference type="GeneTree" id="ENSGT00560000077332"/>
<dbReference type="InParanoid" id="Q8CJ27"/>
<dbReference type="OMA" id="QSHWRAT"/>
<dbReference type="OrthoDB" id="2148418at2759"/>
<dbReference type="PhylomeDB" id="Q8CJ27"/>
<dbReference type="TreeFam" id="TF351180"/>
<dbReference type="BioGRID-ORCS" id="12316">
    <property type="hits" value="4 hits in 80 CRISPR screens"/>
</dbReference>
<dbReference type="CD-CODE" id="01CA17F3">
    <property type="entry name" value="Centrosome"/>
</dbReference>
<dbReference type="PRO" id="PR:Q8CJ27"/>
<dbReference type="Proteomes" id="UP000000589">
    <property type="component" value="Chromosome 1"/>
</dbReference>
<dbReference type="RNAct" id="Q8CJ27">
    <property type="molecule type" value="protein"/>
</dbReference>
<dbReference type="Bgee" id="ENSMUSG00000033952">
    <property type="expression patterns" value="Expressed in primary oocyte and 196 other cell types or tissues"/>
</dbReference>
<dbReference type="GO" id="GO:0016324">
    <property type="term" value="C:apical plasma membrane"/>
    <property type="evidence" value="ECO:0007669"/>
    <property type="project" value="Ensembl"/>
</dbReference>
<dbReference type="GO" id="GO:0005813">
    <property type="term" value="C:centrosome"/>
    <property type="evidence" value="ECO:0007669"/>
    <property type="project" value="Ensembl"/>
</dbReference>
<dbReference type="GO" id="GO:0005737">
    <property type="term" value="C:cytoplasm"/>
    <property type="evidence" value="ECO:0000314"/>
    <property type="project" value="MGI"/>
</dbReference>
<dbReference type="GO" id="GO:0072687">
    <property type="term" value="C:meiotic spindle"/>
    <property type="evidence" value="ECO:0000314"/>
    <property type="project" value="MGI"/>
</dbReference>
<dbReference type="GO" id="GO:0005874">
    <property type="term" value="C:microtubule"/>
    <property type="evidence" value="ECO:0000314"/>
    <property type="project" value="MGI"/>
</dbReference>
<dbReference type="GO" id="GO:0036449">
    <property type="term" value="C:microtubule minus-end"/>
    <property type="evidence" value="ECO:0007669"/>
    <property type="project" value="Ensembl"/>
</dbReference>
<dbReference type="GO" id="GO:0030496">
    <property type="term" value="C:midbody"/>
    <property type="evidence" value="ECO:0000314"/>
    <property type="project" value="MGI"/>
</dbReference>
<dbReference type="GO" id="GO:0097431">
    <property type="term" value="C:mitotic spindle pole"/>
    <property type="evidence" value="ECO:0000314"/>
    <property type="project" value="MGI"/>
</dbReference>
<dbReference type="GO" id="GO:0005634">
    <property type="term" value="C:nucleus"/>
    <property type="evidence" value="ECO:0007669"/>
    <property type="project" value="UniProtKB-SubCell"/>
</dbReference>
<dbReference type="GO" id="GO:0000922">
    <property type="term" value="C:spindle pole"/>
    <property type="evidence" value="ECO:0000314"/>
    <property type="project" value="MGI"/>
</dbReference>
<dbReference type="GO" id="GO:0005516">
    <property type="term" value="F:calmodulin binding"/>
    <property type="evidence" value="ECO:0000314"/>
    <property type="project" value="MGI"/>
</dbReference>
<dbReference type="GO" id="GO:0008356">
    <property type="term" value="P:asymmetric cell division"/>
    <property type="evidence" value="ECO:0000315"/>
    <property type="project" value="MGI"/>
</dbReference>
<dbReference type="GO" id="GO:0007420">
    <property type="term" value="P:brain development"/>
    <property type="evidence" value="ECO:0000315"/>
    <property type="project" value="MGI"/>
</dbReference>
<dbReference type="GO" id="GO:0021987">
    <property type="term" value="P:cerebral cortex development"/>
    <property type="evidence" value="ECO:0000315"/>
    <property type="project" value="MGI"/>
</dbReference>
<dbReference type="GO" id="GO:0048589">
    <property type="term" value="P:developmental growth"/>
    <property type="evidence" value="ECO:0000315"/>
    <property type="project" value="MGI"/>
</dbReference>
<dbReference type="GO" id="GO:0021873">
    <property type="term" value="P:forebrain neuroblast division"/>
    <property type="evidence" value="ECO:0000315"/>
    <property type="project" value="MGI"/>
</dbReference>
<dbReference type="GO" id="GO:0051661">
    <property type="term" value="P:maintenance of centrosome location"/>
    <property type="evidence" value="ECO:0000315"/>
    <property type="project" value="MGI"/>
</dbReference>
<dbReference type="GO" id="GO:0008584">
    <property type="term" value="P:male gonad development"/>
    <property type="evidence" value="ECO:0000315"/>
    <property type="project" value="MGI"/>
</dbReference>
<dbReference type="GO" id="GO:0090306">
    <property type="term" value="P:meiotic spindle assembly"/>
    <property type="evidence" value="ECO:0000315"/>
    <property type="project" value="MGI"/>
</dbReference>
<dbReference type="GO" id="GO:0045769">
    <property type="term" value="P:negative regulation of asymmetric cell division"/>
    <property type="evidence" value="ECO:0000315"/>
    <property type="project" value="MGI"/>
</dbReference>
<dbReference type="GO" id="GO:0045665">
    <property type="term" value="P:negative regulation of neuron differentiation"/>
    <property type="evidence" value="ECO:0000315"/>
    <property type="project" value="MGI"/>
</dbReference>
<dbReference type="GO" id="GO:0007405">
    <property type="term" value="P:neuroblast proliferation"/>
    <property type="evidence" value="ECO:0000315"/>
    <property type="project" value="MGI"/>
</dbReference>
<dbReference type="GO" id="GO:0001764">
    <property type="term" value="P:neuron migration"/>
    <property type="evidence" value="ECO:0000315"/>
    <property type="project" value="MGI"/>
</dbReference>
<dbReference type="GO" id="GO:0097150">
    <property type="term" value="P:neuronal stem cell population maintenance"/>
    <property type="evidence" value="ECO:0000315"/>
    <property type="project" value="MGI"/>
</dbReference>
<dbReference type="GO" id="GO:0048477">
    <property type="term" value="P:oogenesis"/>
    <property type="evidence" value="ECO:0000315"/>
    <property type="project" value="MGI"/>
</dbReference>
<dbReference type="GO" id="GO:0090263">
    <property type="term" value="P:positive regulation of canonical Wnt signaling pathway"/>
    <property type="evidence" value="ECO:0000316"/>
    <property type="project" value="MGI"/>
</dbReference>
<dbReference type="GO" id="GO:0002052">
    <property type="term" value="P:positive regulation of neuroblast proliferation"/>
    <property type="evidence" value="ECO:0000315"/>
    <property type="project" value="MGI"/>
</dbReference>
<dbReference type="GO" id="GO:0051445">
    <property type="term" value="P:regulation of meiotic cell cycle"/>
    <property type="evidence" value="ECO:0000315"/>
    <property type="project" value="CACAO"/>
</dbReference>
<dbReference type="GO" id="GO:0007283">
    <property type="term" value="P:spermatogenesis"/>
    <property type="evidence" value="ECO:0000315"/>
    <property type="project" value="MGI"/>
</dbReference>
<dbReference type="GO" id="GO:0051653">
    <property type="term" value="P:spindle localization"/>
    <property type="evidence" value="ECO:0007669"/>
    <property type="project" value="Ensembl"/>
</dbReference>
<dbReference type="CDD" id="cd21223">
    <property type="entry name" value="CH_ASPM_rpt1"/>
    <property type="match status" value="1"/>
</dbReference>
<dbReference type="CDD" id="cd21224">
    <property type="entry name" value="CH_ASPM_rpt2"/>
    <property type="match status" value="1"/>
</dbReference>
<dbReference type="FunFam" id="1.20.5.190:FF:000093">
    <property type="entry name" value="Abnormal spindle microtubule assembly"/>
    <property type="match status" value="1"/>
</dbReference>
<dbReference type="FunFam" id="1.20.5.190:FF:000052">
    <property type="entry name" value="Abnormal spindle-like microcephaly-associated protein"/>
    <property type="match status" value="1"/>
</dbReference>
<dbReference type="FunFam" id="1.10.418.10:FF:000051">
    <property type="entry name" value="Abnormal spindle-like microcephaly-associated protein homolog"/>
    <property type="match status" value="1"/>
</dbReference>
<dbReference type="FunFam" id="1.20.5.190:FF:000008">
    <property type="entry name" value="Abnormal spindle-like microcephaly-associated protein homolog"/>
    <property type="match status" value="5"/>
</dbReference>
<dbReference type="FunFam" id="1.20.5.190:FF:000010">
    <property type="entry name" value="Abnormal spindle-like microcephaly-associated protein homolog"/>
    <property type="match status" value="1"/>
</dbReference>
<dbReference type="FunFam" id="1.20.5.190:FF:000016">
    <property type="entry name" value="Abnormal spindle-like microcephaly-associated protein homolog"/>
    <property type="match status" value="1"/>
</dbReference>
<dbReference type="FunFam" id="1.20.5.190:FF:000032">
    <property type="entry name" value="Abnormal spindle-like microcephaly-associated protein homolog"/>
    <property type="match status" value="1"/>
</dbReference>
<dbReference type="FunFam" id="1.20.5.190:FF:000053">
    <property type="entry name" value="Abnormal spindle-like microcephaly-associated protein homolog"/>
    <property type="match status" value="1"/>
</dbReference>
<dbReference type="FunFam" id="1.20.5.190:FF:000059">
    <property type="entry name" value="Abnormal spindle-like microcephaly-associated protein homolog"/>
    <property type="match status" value="1"/>
</dbReference>
<dbReference type="FunFam" id="2.60.40.10:FF:001429">
    <property type="entry name" value="Abnormal spindle-like microcephaly-associated protein homolog"/>
    <property type="match status" value="1"/>
</dbReference>
<dbReference type="Gene3D" id="1.20.5.190">
    <property type="match status" value="25"/>
</dbReference>
<dbReference type="Gene3D" id="1.10.418.10">
    <property type="entry name" value="Calponin-like domain"/>
    <property type="match status" value="2"/>
</dbReference>
<dbReference type="Gene3D" id="2.60.40.10">
    <property type="entry name" value="Immunoglobulins"/>
    <property type="match status" value="1"/>
</dbReference>
<dbReference type="InterPro" id="IPR016024">
    <property type="entry name" value="ARM-type_fold"/>
</dbReference>
<dbReference type="InterPro" id="IPR031549">
    <property type="entry name" value="ASH"/>
</dbReference>
<dbReference type="InterPro" id="IPR051185">
    <property type="entry name" value="ASPM"/>
</dbReference>
<dbReference type="InterPro" id="IPR001715">
    <property type="entry name" value="CH_dom"/>
</dbReference>
<dbReference type="InterPro" id="IPR036872">
    <property type="entry name" value="CH_dom_sf"/>
</dbReference>
<dbReference type="InterPro" id="IPR013783">
    <property type="entry name" value="Ig-like_fold"/>
</dbReference>
<dbReference type="InterPro" id="IPR000048">
    <property type="entry name" value="IQ_motif_EF-hand-BS"/>
</dbReference>
<dbReference type="InterPro" id="IPR027417">
    <property type="entry name" value="P-loop_NTPase"/>
</dbReference>
<dbReference type="PANTHER" id="PTHR22706">
    <property type="entry name" value="ASSEMBLY FACTOR FOR SPINDLE MICROTUBULES"/>
    <property type="match status" value="1"/>
</dbReference>
<dbReference type="PANTHER" id="PTHR22706:SF1">
    <property type="entry name" value="ASSEMBLY FACTOR FOR SPINDLE MICROTUBULES"/>
    <property type="match status" value="1"/>
</dbReference>
<dbReference type="Pfam" id="PF15780">
    <property type="entry name" value="ASH"/>
    <property type="match status" value="1"/>
</dbReference>
<dbReference type="Pfam" id="PF00307">
    <property type="entry name" value="CH"/>
    <property type="match status" value="1"/>
</dbReference>
<dbReference type="Pfam" id="PF00612">
    <property type="entry name" value="IQ"/>
    <property type="match status" value="30"/>
</dbReference>
<dbReference type="SMART" id="SM00033">
    <property type="entry name" value="CH"/>
    <property type="match status" value="2"/>
</dbReference>
<dbReference type="SMART" id="SM00015">
    <property type="entry name" value="IQ"/>
    <property type="match status" value="55"/>
</dbReference>
<dbReference type="SUPFAM" id="SSF48371">
    <property type="entry name" value="ARM repeat"/>
    <property type="match status" value="1"/>
</dbReference>
<dbReference type="SUPFAM" id="SSF47576">
    <property type="entry name" value="Calponin-homology domain, CH-domain"/>
    <property type="match status" value="1"/>
</dbReference>
<dbReference type="SUPFAM" id="SSF52540">
    <property type="entry name" value="P-loop containing nucleoside triphosphate hydrolases"/>
    <property type="match status" value="16"/>
</dbReference>
<dbReference type="PROSITE" id="PS50021">
    <property type="entry name" value="CH"/>
    <property type="match status" value="2"/>
</dbReference>
<dbReference type="PROSITE" id="PS50096">
    <property type="entry name" value="IQ"/>
    <property type="match status" value="33"/>
</dbReference>
<evidence type="ECO:0000250" key="1">
    <source>
        <dbReference type="UniProtKB" id="Q8IZT6"/>
    </source>
</evidence>
<evidence type="ECO:0000255" key="2"/>
<evidence type="ECO:0000255" key="3">
    <source>
        <dbReference type="PROSITE-ProRule" id="PRU00044"/>
    </source>
</evidence>
<evidence type="ECO:0000255" key="4">
    <source>
        <dbReference type="PROSITE-ProRule" id="PRU00116"/>
    </source>
</evidence>
<evidence type="ECO:0000256" key="5">
    <source>
        <dbReference type="SAM" id="MobiDB-lite"/>
    </source>
</evidence>
<evidence type="ECO:0000269" key="6">
    <source>
    </source>
</evidence>
<evidence type="ECO:0000269" key="7">
    <source>
    </source>
</evidence>
<evidence type="ECO:0000269" key="8">
    <source>
    </source>
</evidence>
<evidence type="ECO:0000269" key="9">
    <source>
    </source>
</evidence>
<evidence type="ECO:0000305" key="10"/>
<name>ASPM_MOUSE</name>
<protein>
    <recommendedName>
        <fullName>Abnormal spindle-like microcephaly-associated protein homolog</fullName>
    </recommendedName>
    <alternativeName>
        <fullName>Calmodulin-binding protein Sha1</fullName>
        <shortName>Calmodulin-binding protein 1</shortName>
    </alternativeName>
    <alternativeName>
        <fullName>Spindle and hydroxyurea checkpoint abnormal protein</fullName>
    </alternativeName>
</protein>
<accession>Q8CJ27</accession>
<accession>A0A0G2JES1</accession>
<accession>B1ARM7</accession>
<accession>O88482</accession>
<accession>Q4G1G9</accession>
<accession>Q8BJI8</accession>
<accession>Q8BKT4</accession>
<gene>
    <name type="primary">Aspm</name>
    <name type="synonym">Calmbp1</name>
    <name type="synonym">Sha1</name>
</gene>
<feature type="chain" id="PRO_0000191336" description="Abnormal spindle-like microcephaly-associated protein homolog">
    <location>
        <begin position="1"/>
        <end position="3122"/>
    </location>
</feature>
<feature type="domain" description="Calponin-homology (CH) 1" evidence="3">
    <location>
        <begin position="888"/>
        <end position="1024"/>
    </location>
</feature>
<feature type="domain" description="Calponin-homology (CH) 2" evidence="3">
    <location>
        <begin position="1078"/>
        <end position="1229"/>
    </location>
</feature>
<feature type="domain" description="IQ 1" evidence="4">
    <location>
        <begin position="1234"/>
        <end position="1263"/>
    </location>
</feature>
<feature type="domain" description="IQ 2" evidence="4">
    <location>
        <begin position="1315"/>
        <end position="1346"/>
    </location>
</feature>
<feature type="domain" description="IQ 3" evidence="4">
    <location>
        <begin position="1410"/>
        <end position="1439"/>
    </location>
</feature>
<feature type="domain" description="IQ 4" evidence="4">
    <location>
        <begin position="1504"/>
        <end position="1535"/>
    </location>
</feature>
<feature type="domain" description="IQ 5" evidence="4">
    <location>
        <begin position="1550"/>
        <end position="1579"/>
    </location>
</feature>
<feature type="domain" description="IQ 6" evidence="4">
    <location>
        <begin position="1600"/>
        <end position="1629"/>
    </location>
</feature>
<feature type="domain" description="IQ 7" evidence="4">
    <location>
        <begin position="1623"/>
        <end position="1652"/>
    </location>
</feature>
<feature type="domain" description="IQ 8" evidence="4">
    <location>
        <begin position="1696"/>
        <end position="1725"/>
    </location>
</feature>
<feature type="domain" description="IQ 9" evidence="4">
    <location>
        <begin position="1719"/>
        <end position="1750"/>
    </location>
</feature>
<feature type="domain" description="IQ 10" evidence="4">
    <location>
        <begin position="1769"/>
        <end position="1798"/>
    </location>
</feature>
<feature type="domain" description="IQ 11" evidence="4">
    <location>
        <begin position="1792"/>
        <end position="1821"/>
    </location>
</feature>
<feature type="domain" description="IQ 12" evidence="4">
    <location>
        <begin position="1842"/>
        <end position="1871"/>
    </location>
</feature>
<feature type="domain" description="IQ 13" evidence="4">
    <location>
        <begin position="1865"/>
        <end position="1896"/>
    </location>
</feature>
<feature type="domain" description="IQ 14" evidence="4">
    <location>
        <begin position="1915"/>
        <end position="1946"/>
    </location>
</feature>
<feature type="domain" description="IQ 15" evidence="4">
    <location>
        <begin position="1938"/>
        <end position="1967"/>
    </location>
</feature>
<feature type="domain" description="IQ 16" evidence="4">
    <location>
        <begin position="1988"/>
        <end position="2017"/>
    </location>
</feature>
<feature type="domain" description="IQ 17" evidence="4">
    <location>
        <begin position="2011"/>
        <end position="2042"/>
    </location>
</feature>
<feature type="domain" description="IQ 18" evidence="4">
    <location>
        <begin position="2061"/>
        <end position="2092"/>
    </location>
</feature>
<feature type="domain" description="IQ 19" evidence="4">
    <location>
        <begin position="2134"/>
        <end position="2165"/>
    </location>
</feature>
<feature type="domain" description="IQ 20" evidence="4">
    <location>
        <begin position="2157"/>
        <end position="2188"/>
    </location>
</feature>
<feature type="domain" description="IQ 21" evidence="4">
    <location>
        <begin position="2207"/>
        <end position="2238"/>
    </location>
</feature>
<feature type="domain" description="IQ 22" evidence="4">
    <location>
        <begin position="2230"/>
        <end position="2261"/>
    </location>
</feature>
<feature type="domain" description="IQ 23" evidence="4">
    <location>
        <begin position="2279"/>
        <end position="2310"/>
    </location>
</feature>
<feature type="domain" description="IQ 24" evidence="4">
    <location>
        <begin position="2302"/>
        <end position="2333"/>
    </location>
</feature>
<feature type="domain" description="IQ 25" evidence="4">
    <location>
        <begin position="2343"/>
        <end position="2374"/>
    </location>
</feature>
<feature type="domain" description="IQ 26" evidence="4">
    <location>
        <begin position="2366"/>
        <end position="2397"/>
    </location>
</feature>
<feature type="domain" description="IQ 27" evidence="4">
    <location>
        <begin position="2416"/>
        <end position="2447"/>
    </location>
</feature>
<feature type="domain" description="IQ 28" evidence="4">
    <location>
        <begin position="2491"/>
        <end position="2522"/>
    </location>
</feature>
<feature type="domain" description="IQ 29" evidence="4">
    <location>
        <begin position="2602"/>
        <end position="2633"/>
    </location>
</feature>
<feature type="domain" description="IQ 30" evidence="4">
    <location>
        <begin position="2674"/>
        <end position="2705"/>
    </location>
</feature>
<feature type="domain" description="IQ 31" evidence="4">
    <location>
        <begin position="2724"/>
        <end position="2755"/>
    </location>
</feature>
<feature type="domain" description="IQ 32" evidence="4">
    <location>
        <begin position="2849"/>
        <end position="2880"/>
    </location>
</feature>
<feature type="region of interest" description="Disordered" evidence="5">
    <location>
        <begin position="1"/>
        <end position="26"/>
    </location>
</feature>
<feature type="region of interest" description="Disordered" evidence="5">
    <location>
        <begin position="139"/>
        <end position="169"/>
    </location>
</feature>
<feature type="region of interest" description="Sufficient for interaction with KATNA1:KATNB1" evidence="8">
    <location>
        <begin position="289"/>
        <end position="388"/>
    </location>
</feature>
<feature type="region of interest" description="Disordered" evidence="5">
    <location>
        <begin position="579"/>
        <end position="600"/>
    </location>
</feature>
<feature type="coiled-coil region" evidence="2">
    <location>
        <begin position="1025"/>
        <end position="1045"/>
    </location>
</feature>
<feature type="compositionally biased region" description="Basic and acidic residues" evidence="5">
    <location>
        <begin position="10"/>
        <end position="21"/>
    </location>
</feature>
<feature type="modified residue" description="Phosphoserine" evidence="1">
    <location>
        <position position="348"/>
    </location>
</feature>
<feature type="modified residue" description="Phosphoserine" evidence="1">
    <location>
        <position position="373"/>
    </location>
</feature>
<feature type="modified residue" description="Phosphoserine" evidence="1">
    <location>
        <position position="573"/>
    </location>
</feature>
<feature type="modified residue" description="Phosphoserine" evidence="1">
    <location>
        <position position="1071"/>
    </location>
</feature>
<feature type="splice variant" id="VSP_059014" description="In isoform 2.">
    <location>
        <begin position="1323"/>
        <end position="2587"/>
    </location>
</feature>
<feature type="mutagenesis site" description="Disrupts interaction with KATNA1:KATNB1; when associated with A-377." evidence="8">
    <original>F</original>
    <variation>A</variation>
    <location>
        <position position="302"/>
    </location>
</feature>
<feature type="mutagenesis site" description="Disrupts interaction with KATNA1:KATNB1." evidence="8">
    <original>F</original>
    <variation>A</variation>
    <location>
        <position position="352"/>
    </location>
</feature>
<feature type="mutagenesis site" description="Disrupts interaction with KATNA1:KATNB1; when associated with A-302." evidence="8">
    <original>F</original>
    <variation>A</variation>
    <location>
        <position position="377"/>
    </location>
</feature>
<feature type="sequence conflict" description="In Ref. 1; AAN46088 and 2; AAY46816." evidence="10" ref="1 2">
    <original>T</original>
    <variation>K</variation>
    <location>
        <position position="433"/>
    </location>
</feature>
<feature type="sequence conflict" description="In Ref. 1; AAN46088 and 2; AAY46816." evidence="10" ref="1 2">
    <original>IS</original>
    <variation>TC</variation>
    <location>
        <begin position="443"/>
        <end position="444"/>
    </location>
</feature>
<feature type="sequence conflict" description="In Ref. 1; AAN46088 and 2; AAY46816." evidence="10" ref="1 2">
    <original>E</original>
    <variation>Q</variation>
    <location>
        <position position="498"/>
    </location>
</feature>
<feature type="sequence conflict" description="In Ref. 1; AAN46088 and 2; AAY46816." evidence="10" ref="1 2">
    <original>S</original>
    <variation>P</variation>
    <location>
        <position position="513"/>
    </location>
</feature>
<feature type="sequence conflict" description="In Ref. 1; AAN46088 and 2; AAY46816." evidence="10" ref="1 2">
    <original>H</original>
    <variation>L</variation>
    <location>
        <position position="591"/>
    </location>
</feature>
<feature type="sequence conflict" description="In Ref. 1; AAN46088 and 2; AAY46816." evidence="10" ref="1 2">
    <original>I</original>
    <variation>V</variation>
    <location>
        <position position="1111"/>
    </location>
</feature>
<feature type="sequence conflict" description="In Ref. 1; AAN46088." evidence="10" ref="1">
    <original>R</original>
    <variation>G</variation>
    <location>
        <position position="1378"/>
    </location>
</feature>
<feature type="sequence conflict" description="In Ref. 5; AAC79683." evidence="10" ref="5">
    <original>AVRRFLLCRRQEKITSCATRIQALWRGYSWR</original>
    <variation>RYAAFSSAEDRKRSLAAPLEFRHYGEAILE</variation>
    <location>
        <begin position="2836"/>
        <end position="2866"/>
    </location>
</feature>
<feature type="sequence conflict" description="In Ref. 5; AAC79683." evidence="10" ref="5">
    <original>S</original>
    <variation>R</variation>
    <location>
        <position position="2938"/>
    </location>
</feature>
<comment type="function">
    <text evidence="7 8 9">Involved in mitotic spindle regulation and coordination of mitotic processes. The function in regulating microtubule dynamics at spindle poles including spindle orientation, astral microtubule density and poleward microtubule flux seem to depend on its association with the katanin complex formed by KATNA1 and KATNB1. Enhances the microtubule lattice severing activity of KATNA1 by recruiting the katanin complex to microtubules. Can block microtubule minus-end growth and reversely this function can be enhanced by the katanin complex (PubMed:28436967). May have a preferential role in regulating neurogenesis.</text>
</comment>
<comment type="subunit">
    <text evidence="8">Interacts with KATNA1 and KATNB1; katanin complex formation KATNA1:KATNB1 is required for the association.</text>
</comment>
<comment type="subcellular location">
    <subcellularLocation>
        <location evidence="9">Cytoplasm</location>
    </subcellularLocation>
    <subcellularLocation>
        <location evidence="8">Cytoplasm</location>
        <location evidence="8">Cytoskeleton</location>
        <location evidence="8">Spindle</location>
    </subcellularLocation>
    <subcellularLocation>
        <location evidence="9">Nucleus</location>
    </subcellularLocation>
    <text evidence="8">Localizes to spindle poles during mitosis. Associates with microtubule minus ends (PubMed:28436967). The nuclear-cytoplasmic distribution could be regulated by the availability of calmodulin.</text>
</comment>
<comment type="alternative products">
    <event type="alternative splicing"/>
    <isoform>
        <id>Q8CJ27-1</id>
        <name>1</name>
        <sequence type="displayed"/>
    </isoform>
    <isoform>
        <id>Q8CJ27-2</id>
        <name>2</name>
        <sequence type="described" ref="VSP_059014"/>
    </isoform>
</comment>
<comment type="tissue specificity">
    <text evidence="6 7">Expressed in fetal brain, peripheral nervous system, liver and spleen. In the adult, expressed exclusively in testis, ovary and spleen.</text>
</comment>
<comment type="developmental stage">
    <text evidence="7">Expressed during cerebral cortical neurogenesis, specifically in the cerebral cortical ventricular zone at 14.5 dpc and 16.5 dpc. Expression is greatly reduced by the day of birth (P0), when neurogenesis in the cortical ventricular zone is completed and gliogenesis is increased. Expression is limited to rare scattered cells in the neocortex by postnatal day 9 (P9).</text>
</comment>
<comment type="sequence caution" evidence="10">
    <conflict type="erroneous initiation">
        <sequence resource="EMBL-CDS" id="AAC79683"/>
    </conflict>
</comment>
<proteinExistence type="evidence at protein level"/>
<sequence length="3122" mass="364218">MATMQAASCPEERGRRARPDPEAGDPSPPVLLLSHFCGVPFLCFGDVRVGTSRTRSLVLHNPHEEPLQVELSLLRAAGQGFSVAPNRCELKPKEKLTISVTWTPLREGGVREIVTFLVNDFLKHQAILLGNAEEPKKKKRSLWNTSKKIPASSKHTKRTSKNQHFNESFTISQKDRIRSPLQPCENLAMSECSSPTENKVPTPSISPIRECQSETCLPLFLRESTAYSSLHESENTQNLKVQDASISQTFDFNEEVANETFINPISVCHQSEGDRKLTLAPNCSSPLNSTQTQIHFLSPDSFVNNRYTSDNDLKSMKNVLSDTFRKDPAESVCLESQTVHEVCQTILSPDSFLNDNYGLKKGLNFKSVNPVLSPTQFVKDSMGHVGQQTGKSNEASQDWRINEGLAYTPECQHAQTPSSRSEKQNPVEVKPHTYDFTKQKPKISEFQDAFCHQSKQPHKRRPILSATVTKRKPTNAREKLPEINKPDAKRCLEGLVGERGKEVGSLREKGFHSSLPVVEPGVSKALSYRDEVTPATVVVARKRKSHGTVGDANGKVAAEEWMDMCEVKRIHFSPLESTPSTVARTTKKEGHTSKRISSLERSGLKKKMDSSILKTPLSKTKKKRRSIVAVAQSHLTFIKPLKAAIPRHPMPFAAKNMFYDERWKEKQEQGFTWWLNYILTPDDFTVKTNVSKVNAASLVLGAESQHKISVPKAPTKEEVSLRAYTASCRLNRLRRTACSLFTSEKMVKAIKKVEIEIEVGRLLVRKDRHLWKDIGQRQKVLNWLLSYNPLWLRIGLETVFGELIPLADNSDVTGLAMFILNRLLWNPDIAAEYRHPTVPLLFRDGHEAALSKFTLKKLLLLICFLDHAKISRLIDHDPCLFCKDAEFKASKELLLAFSRDFLSGEGDLSRHLSFLGLPVSHVQTPLDEFDFAVTNLAVDLQCGVRLVRTVELLTQNWNLSDKLRIPAISRVQKMHNVDLVLQVLKSRGVPLTDEHGSAISSKDVVDRHREKTLGLLWKIALAFQVDISLNLDQLKEEIDFLKHTHSIKRAMSALTCPSQAITNKQRDKRISGNFERYGDSVQLLMDWVNAVCAFYNKKVENFTVSFSDGRILCYLIHHYHPCYVPFDAICQRTSQSVACAQTGSVVLNSSSESEGGCLDLSLEALDHESTPEMYKELLENEKKNFHLVRSAARDLGGIPAMIHHSDMSNTIPDEKVVITYLSFLCARLLDLRKEIRAARLIQTTWRKYKLKRDLKHHQERDKAARVIQSVVLNFLSRRRLQKNVSAALVIQKCWRRVSAQRKLRMLKNEKLAKLQNKSAVLIQAYWRRYSTRKRFLRLKHYSVILQSRIRMKIALTSYKRYLWATVTIQRHWRAYLSRKRDQQIFRKLKSSSLVIQFMFRRWKRRKLQLQTKAAVTLQRAFREWHLRKQIRERSAVVIQSWYRMHRELQKYIYIRSCVIVIQRRVRCFQAQKLYKRRKDAILTLQKHYRARQKGKLAHADYLQKRAATIRLQAAFRGMKARHSYRLQIGAACVLQSYWRMRQERVRFLNLKKMVIKLQAHIRKYQQLQKYKKIKKAAITIQTHFRASISARRVLASYQKTRSSVIVLQSACRGMQARKAFRHALASVIKIQSYYRAYICRKTFQNFKNATIKLQSIVKMKQSRKQYLQIRAAALFIQRWYRSQKLASQKRKEYIQVRESCIKLQSHFRGCLVRKQLRLQCKAAISLQSYFRMRTARQRYLKMCKAALVIQSFYCAYRAQISQRKNFLQVKRAAICLQAAYRGCKVRRQIKQQSTAAVTIQRVFRGHSQRMKYQTMLQSAVKIQRWYRAQKVAYDMRIQFLKTREAVVCLQSAYRGWQVRQQLRRQHEAAVKIQSTFRMAVAQQQYKLLRAAAAVIQQHVRARAAGKRQHLAYIQLRHAALVFQAAWKGKMLRRQIARQHQCAALIQSYYRMHIQRRKWSIMKTAALQIQLCYRAYKVGKEQRHLYLKTKAAVVTLQSAYRGMKVRKRVAECHKAAVTIQSKFRAYRTQKKYTTYRTSAIVIQRWYRNIKITTQQHQEYLNLRRAAVQVQAAYRGIRVRRRIQHMHMAATLIEAMFKMRQSRVRYLKMRTAALIIQVRYRAYYLGKIQHEKYLRTLKAIKTLQAGVRGARVRRTVRKMHFAATLIQSHFRGHRQQTYFHRLRKAATMVQQRYRAVKEGSAEFQRYSRLRRSVLLIQAAFRGLRTRRHLKAMHLAATLIQRRFRTFAMRRKFLSLRKTAIWIQRQYRARLYAKYSRQQLLLEKAVIKIQSSYRGWVVRKRVQKMHRAATVIQATFRMHGAYMRYQHLKRASVVIQVHTAAELQRQKHAAVILQAAVRGMKTRSHLKTMHSSATLIQSQFRAFIVRRRFIALRKAAIFVQRKFRATLYAKHKLHQFLQLRKAAITIQSSYRRLMVQKKLQEMHRAAALIQATFRMHRTYVAFHIWKCASIRIQQCYRTYRTIKLQKEKLIREEQHSAAVLIQSTYRMYRQRCFYQQRRWAAKVIQKTYRANKRRQDLLYVCKEETPLLQMHFQGLNTAKQGRQQHGAAMITQKHFRAFKARRLMEAERGFQAGCRKYKAKKYLSKVEAACRIQAWYRRWRAHKKYLTLLKAVNIIEGYLSAQLARRRFLKMRAAAIIIQRKWRATLSVRGARENLKRHRAACVIQAHFRGYQARQSFLQQRSAVLIIQRHVRAMVAAKQERIKYIKLKKSTVVVQALVRGWLVRKRVSEQKAKTRLFHFTAAAYCHMCALKIQRAYRLHVTLRNAKKHMDSVIFIQRWFRKRLQRKRFIEQYHKILSTRREAHACWLQQDRAASVIQKAVRRFLLCRRQEKITSCATRIQALWRGYSWRKKNDHTEIKAIRRSLRAVSTTVEEENKLYRRTERALHHLLTYKHLSAILDALKHLEVVTRLSPLCCENMAESGAVSTIFVVIRSCNRSVPCMEVVGYAVQVLLNVAKYDKTIAAVYEAENCVDTLLELLQVYREKPGDRVAEKSASIFTRTCCLLAVLLKTEQCAFDAQSRSKVTDRIYRLYKFTVPKHKVNTQGLFDKQKQNSCVGFPCIPERTMKTRLVSRLKPQWVLRRDNVEEITNSLQAIQLVMDTLGISY</sequence>
<keyword id="KW-0002">3D-structure</keyword>
<keyword id="KW-0025">Alternative splicing</keyword>
<keyword id="KW-0112">Calmodulin-binding</keyword>
<keyword id="KW-0131">Cell cycle</keyword>
<keyword id="KW-0132">Cell division</keyword>
<keyword id="KW-0175">Coiled coil</keyword>
<keyword id="KW-0963">Cytoplasm</keyword>
<keyword id="KW-0206">Cytoskeleton</keyword>
<keyword id="KW-0493">Microtubule</keyword>
<keyword id="KW-0498">Mitosis</keyword>
<keyword id="KW-0539">Nucleus</keyword>
<keyword id="KW-0597">Phosphoprotein</keyword>
<keyword id="KW-1185">Reference proteome</keyword>
<keyword id="KW-0677">Repeat</keyword>